<reference evidence="6" key="1">
    <citation type="submission" date="2007-12" db="EMBL/GenBank/DDBJ databases">
        <title>The mitochondrial genome of the Yellow fever mosquito - Aedes aegypti.</title>
        <authorList>
            <person name="Lobo N.F."/>
            <person name="Lovin D."/>
            <person name="DeBruyn B."/>
            <person name="Puiu D."/>
            <person name="Shumway M."/>
            <person name="Haas B."/>
            <person name="Nene V."/>
            <person name="Severson D.W."/>
        </authorList>
    </citation>
    <scope>NUCLEOTIDE SEQUENCE [LARGE SCALE GENOMIC DNA]</scope>
    <source>
        <strain evidence="6">LVPib12</strain>
    </source>
</reference>
<organism>
    <name type="scientific">Aedes aegypti</name>
    <name type="common">Yellowfever mosquito</name>
    <name type="synonym">Culex aegypti</name>
    <dbReference type="NCBI Taxonomy" id="7159"/>
    <lineage>
        <taxon>Eukaryota</taxon>
        <taxon>Metazoa</taxon>
        <taxon>Ecdysozoa</taxon>
        <taxon>Arthropoda</taxon>
        <taxon>Hexapoda</taxon>
        <taxon>Insecta</taxon>
        <taxon>Pterygota</taxon>
        <taxon>Neoptera</taxon>
        <taxon>Endopterygota</taxon>
        <taxon>Diptera</taxon>
        <taxon>Nematocera</taxon>
        <taxon>Culicoidea</taxon>
        <taxon>Culicidae</taxon>
        <taxon>Culicinae</taxon>
        <taxon>Aedini</taxon>
        <taxon>Aedes</taxon>
        <taxon>Stegomyia</taxon>
    </lineage>
</organism>
<evidence type="ECO:0000250" key="1">
    <source>
        <dbReference type="UniProtKB" id="P00157"/>
    </source>
</evidence>
<evidence type="ECO:0000250" key="2">
    <source>
        <dbReference type="UniProtKB" id="P00163"/>
    </source>
</evidence>
<evidence type="ECO:0000250" key="3">
    <source>
        <dbReference type="UniProtKB" id="P18935"/>
    </source>
</evidence>
<evidence type="ECO:0000255" key="4">
    <source>
        <dbReference type="PROSITE-ProRule" id="PRU00967"/>
    </source>
</evidence>
<evidence type="ECO:0000255" key="5">
    <source>
        <dbReference type="PROSITE-ProRule" id="PRU00968"/>
    </source>
</evidence>
<evidence type="ECO:0000312" key="6">
    <source>
        <dbReference type="EMBL" id="ABY51634.1"/>
    </source>
</evidence>
<keyword id="KW-0249">Electron transport</keyword>
<keyword id="KW-0349">Heme</keyword>
<keyword id="KW-0408">Iron</keyword>
<keyword id="KW-0472">Membrane</keyword>
<keyword id="KW-0479">Metal-binding</keyword>
<keyword id="KW-0496">Mitochondrion</keyword>
<keyword id="KW-0999">Mitochondrion inner membrane</keyword>
<keyword id="KW-1185">Reference proteome</keyword>
<keyword id="KW-0679">Respiratory chain</keyword>
<keyword id="KW-0812">Transmembrane</keyword>
<keyword id="KW-1133">Transmembrane helix</keyword>
<keyword id="KW-0813">Transport</keyword>
<keyword id="KW-0830">Ubiquinone</keyword>
<name>CYB_AEDAE</name>
<comment type="function">
    <text evidence="1">Component of the ubiquinol-cytochrome c reductase complex (complex III or cytochrome b-c1 complex) that is part of the mitochondrial respiratory chain. The b-c1 complex mediates electron transfer from ubiquinol to cytochrome c. Contributes to the generation of a proton gradient across the mitochondrial membrane that is then used for ATP synthesis.</text>
</comment>
<comment type="cofactor">
    <cofactor evidence="1">
        <name>heme b</name>
        <dbReference type="ChEBI" id="CHEBI:60344"/>
    </cofactor>
    <text evidence="1">Binds 2 heme b groups non-covalently.</text>
</comment>
<comment type="subunit">
    <text evidence="1">The main subunits of complex b-c1 are: cytochrome b, cytochrome c1 and the Rieske protein.</text>
</comment>
<comment type="subcellular location">
    <subcellularLocation>
        <location evidence="2">Mitochondrion inner membrane</location>
        <topology evidence="2">Multi-pass membrane protein</topology>
    </subcellularLocation>
</comment>
<comment type="miscellaneous">
    <text evidence="1">Heme 1 (or BL or b562) is low-potential and absorbs at about 562 nm, and heme 2 (or BH or b566) is high-potential and absorbs at about 566 nm.</text>
</comment>
<comment type="similarity">
    <text evidence="4 5">Belongs to the cytochrome b family.</text>
</comment>
<comment type="caution">
    <text evidence="1">The full-length protein contains only eight transmembrane helices, not nine as predicted by bioinformatics tools.</text>
</comment>
<dbReference type="EMBL" id="EU352212">
    <property type="protein sequence ID" value="ABY51634.1"/>
    <property type="molecule type" value="Genomic_DNA"/>
</dbReference>
<dbReference type="RefSeq" id="YP_001649173.1">
    <property type="nucleotide sequence ID" value="NC_010241.1"/>
</dbReference>
<dbReference type="SMR" id="B0FWD7"/>
<dbReference type="FunCoup" id="B0FWD7">
    <property type="interactions" value="132"/>
</dbReference>
<dbReference type="STRING" id="7159.B0FWD7"/>
<dbReference type="PaxDb" id="7159-AAEL018685-PA"/>
<dbReference type="EnsemblMetazoa" id="AAEL018685-RA">
    <property type="protein sequence ID" value="AAEL018685-PA"/>
    <property type="gene ID" value="AAEL018685"/>
</dbReference>
<dbReference type="VEuPathDB" id="VectorBase:AAEL018685"/>
<dbReference type="eggNOG" id="KOG4663">
    <property type="taxonomic scope" value="Eukaryota"/>
</dbReference>
<dbReference type="HOGENOM" id="CLU_031114_3_0_1"/>
<dbReference type="InParanoid" id="B0FWD7"/>
<dbReference type="OrthoDB" id="7995168at2759"/>
<dbReference type="Proteomes" id="UP000008820">
    <property type="component" value="Mitochondrion MT"/>
</dbReference>
<dbReference type="Proteomes" id="UP000682892">
    <property type="component" value="Mitochondrion MT"/>
</dbReference>
<dbReference type="GO" id="GO:0005743">
    <property type="term" value="C:mitochondrial inner membrane"/>
    <property type="evidence" value="ECO:0007669"/>
    <property type="project" value="UniProtKB-SubCell"/>
</dbReference>
<dbReference type="GO" id="GO:0045275">
    <property type="term" value="C:respiratory chain complex III"/>
    <property type="evidence" value="ECO:0007669"/>
    <property type="project" value="InterPro"/>
</dbReference>
<dbReference type="GO" id="GO:0046872">
    <property type="term" value="F:metal ion binding"/>
    <property type="evidence" value="ECO:0007669"/>
    <property type="project" value="UniProtKB-KW"/>
</dbReference>
<dbReference type="GO" id="GO:0008121">
    <property type="term" value="F:ubiquinol-cytochrome-c reductase activity"/>
    <property type="evidence" value="ECO:0007669"/>
    <property type="project" value="InterPro"/>
</dbReference>
<dbReference type="GO" id="GO:0006122">
    <property type="term" value="P:mitochondrial electron transport, ubiquinol to cytochrome c"/>
    <property type="evidence" value="ECO:0007669"/>
    <property type="project" value="TreeGrafter"/>
</dbReference>
<dbReference type="CDD" id="cd00290">
    <property type="entry name" value="cytochrome_b_C"/>
    <property type="match status" value="1"/>
</dbReference>
<dbReference type="CDD" id="cd00284">
    <property type="entry name" value="Cytochrome_b_N"/>
    <property type="match status" value="1"/>
</dbReference>
<dbReference type="FunFam" id="1.20.810.10:FF:000002">
    <property type="entry name" value="Cytochrome b"/>
    <property type="match status" value="1"/>
</dbReference>
<dbReference type="Gene3D" id="1.20.810.10">
    <property type="entry name" value="Cytochrome Bc1 Complex, Chain C"/>
    <property type="match status" value="1"/>
</dbReference>
<dbReference type="InterPro" id="IPR005798">
    <property type="entry name" value="Cyt_b/b6_C"/>
</dbReference>
<dbReference type="InterPro" id="IPR036150">
    <property type="entry name" value="Cyt_b/b6_C_sf"/>
</dbReference>
<dbReference type="InterPro" id="IPR005797">
    <property type="entry name" value="Cyt_b/b6_N"/>
</dbReference>
<dbReference type="InterPro" id="IPR027387">
    <property type="entry name" value="Cytb/b6-like_sf"/>
</dbReference>
<dbReference type="InterPro" id="IPR030689">
    <property type="entry name" value="Cytochrome_b"/>
</dbReference>
<dbReference type="InterPro" id="IPR048260">
    <property type="entry name" value="Cytochrome_b_C_euk/bac"/>
</dbReference>
<dbReference type="InterPro" id="IPR048259">
    <property type="entry name" value="Cytochrome_b_N_euk/bac"/>
</dbReference>
<dbReference type="InterPro" id="IPR016174">
    <property type="entry name" value="Di-haem_cyt_TM"/>
</dbReference>
<dbReference type="PANTHER" id="PTHR19271">
    <property type="entry name" value="CYTOCHROME B"/>
    <property type="match status" value="1"/>
</dbReference>
<dbReference type="PANTHER" id="PTHR19271:SF16">
    <property type="entry name" value="CYTOCHROME B"/>
    <property type="match status" value="1"/>
</dbReference>
<dbReference type="Pfam" id="PF00032">
    <property type="entry name" value="Cytochrom_B_C"/>
    <property type="match status" value="1"/>
</dbReference>
<dbReference type="Pfam" id="PF00033">
    <property type="entry name" value="Cytochrome_B"/>
    <property type="match status" value="1"/>
</dbReference>
<dbReference type="PIRSF" id="PIRSF038885">
    <property type="entry name" value="COB"/>
    <property type="match status" value="1"/>
</dbReference>
<dbReference type="SUPFAM" id="SSF81648">
    <property type="entry name" value="a domain/subunit of cytochrome bc1 complex (Ubiquinol-cytochrome c reductase)"/>
    <property type="match status" value="1"/>
</dbReference>
<dbReference type="SUPFAM" id="SSF81342">
    <property type="entry name" value="Transmembrane di-heme cytochromes"/>
    <property type="match status" value="1"/>
</dbReference>
<dbReference type="PROSITE" id="PS51003">
    <property type="entry name" value="CYTB_CTER"/>
    <property type="match status" value="1"/>
</dbReference>
<dbReference type="PROSITE" id="PS51002">
    <property type="entry name" value="CYTB_NTER"/>
    <property type="match status" value="1"/>
</dbReference>
<geneLocation type="mitochondrion" evidence="6"/>
<sequence>MSKSLRKTHPLLKMANNALVDLPAPSNISAWWNFGSLLGLCLIIQILTGLFLAMHYTADIETAFNSVNHIYRDVNNGWFLRICHANGASFFFACLFIHVGRGVYYNSYLYIPTWMIGVIILFMVMATGFLGYVLPWGQMSFWGATVITNLLSAVPYLGTDLVQWIWGGFAVDNATLTRFFTFHFILPFIVLALTMIHLLFLHQTGSNNPLGLNSNVDKIPFHPYFVYKDIVGFIIFMWILIGFIWKFNYLLMDPENFIPANPLVTPVHIQPEWYFLFAYAILRSIPNKLGGVIALVLSIAILMILPFTHTSKFRGLQFYPLNQILFWNMVIVASLLTWIGARPVEDPYVLTGQILTVLYFSYFIINPLMSKYWDKLLN</sequence>
<accession>B0FWD7</accession>
<gene>
    <name evidence="3" type="primary">mt:Cyt-b</name>
    <name evidence="6" type="synonym">CYTB</name>
</gene>
<proteinExistence type="inferred from homology"/>
<feature type="chain" id="PRO_0000347263" description="Cytochrome b">
    <location>
        <begin position="1"/>
        <end position="378"/>
    </location>
</feature>
<feature type="transmembrane region" description="Helical" evidence="1">
    <location>
        <begin position="34"/>
        <end position="54"/>
    </location>
</feature>
<feature type="transmembrane region" description="Helical" evidence="1">
    <location>
        <begin position="78"/>
        <end position="99"/>
    </location>
</feature>
<feature type="transmembrane region" description="Helical" evidence="1">
    <location>
        <begin position="114"/>
        <end position="134"/>
    </location>
</feature>
<feature type="transmembrane region" description="Helical" evidence="1">
    <location>
        <begin position="179"/>
        <end position="199"/>
    </location>
</feature>
<feature type="transmembrane region" description="Helical" evidence="1">
    <location>
        <begin position="227"/>
        <end position="247"/>
    </location>
</feature>
<feature type="transmembrane region" description="Helical" evidence="1">
    <location>
        <begin position="289"/>
        <end position="309"/>
    </location>
</feature>
<feature type="transmembrane region" description="Helical" evidence="1">
    <location>
        <begin position="321"/>
        <end position="341"/>
    </location>
</feature>
<feature type="transmembrane region" description="Helical" evidence="1">
    <location>
        <begin position="348"/>
        <end position="368"/>
    </location>
</feature>
<feature type="binding site" description="axial binding residue" evidence="1">
    <location>
        <position position="84"/>
    </location>
    <ligand>
        <name>heme b</name>
        <dbReference type="ChEBI" id="CHEBI:60344"/>
        <label>b562</label>
    </ligand>
    <ligandPart>
        <name>Fe</name>
        <dbReference type="ChEBI" id="CHEBI:18248"/>
    </ligandPart>
</feature>
<feature type="binding site" description="axial binding residue" evidence="1">
    <location>
        <position position="98"/>
    </location>
    <ligand>
        <name>heme b</name>
        <dbReference type="ChEBI" id="CHEBI:60344"/>
        <label>b566</label>
    </ligand>
    <ligandPart>
        <name>Fe</name>
        <dbReference type="ChEBI" id="CHEBI:18248"/>
    </ligandPart>
</feature>
<feature type="binding site" description="axial binding residue" evidence="1">
    <location>
        <position position="183"/>
    </location>
    <ligand>
        <name>heme b</name>
        <dbReference type="ChEBI" id="CHEBI:60344"/>
        <label>b562</label>
    </ligand>
    <ligandPart>
        <name>Fe</name>
        <dbReference type="ChEBI" id="CHEBI:18248"/>
    </ligandPart>
</feature>
<feature type="binding site" description="axial binding residue" evidence="1">
    <location>
        <position position="197"/>
    </location>
    <ligand>
        <name>heme b</name>
        <dbReference type="ChEBI" id="CHEBI:60344"/>
        <label>b566</label>
    </ligand>
    <ligandPart>
        <name>Fe</name>
        <dbReference type="ChEBI" id="CHEBI:18248"/>
    </ligandPart>
</feature>
<feature type="binding site" evidence="1">
    <location>
        <position position="202"/>
    </location>
    <ligand>
        <name>a ubiquinone</name>
        <dbReference type="ChEBI" id="CHEBI:16389"/>
    </ligand>
</feature>
<protein>
    <recommendedName>
        <fullName evidence="1">Cytochrome b</fullName>
    </recommendedName>
    <alternativeName>
        <fullName evidence="1">Complex III subunit 3</fullName>
    </alternativeName>
    <alternativeName>
        <fullName evidence="1">Complex III subunit III</fullName>
    </alternativeName>
    <alternativeName>
        <fullName evidence="1">Cytochrome b-c1 complex subunit 3</fullName>
    </alternativeName>
    <alternativeName>
        <fullName evidence="1">Ubiquinol-cytochrome-c reductase complex cytochrome b subunit</fullName>
    </alternativeName>
</protein>